<proteinExistence type="evidence at protein level"/>
<sequence>MKCQLLFVATVCLASVWALPVPDEEVAIQPDSGAKAELLTKTVLPTAVEPAPLKPEAEKPAETKTIEAKAAVPEQPDVNANPSPSTPAAEPAKEINSVELKSSAPDVETAPAIPEKKTLPEEAKPAQENAPVEAEKKQEKTARTEAEPTVEAQPQATKAIEQAPEAPAANAEVQKQVVDEVKPQEPKIDAKSAEEPAIPAVVAAEKETPVPEQPARQERINEIEQKDAKKDAAVAEEPAKAAEATPTAAPEAATKSDSNIQVIAPEKKSIESSPAAAAASPAAQAAQAKSGEAPKPVDQQKSTETVAESAPVLKTNAPLAPAGATKVTEAVKEQEKEQPAADTAAKALPEQKKTEETAAPAGAPEPTAAVAPAAVPEAKKIDEAPAAETVVKGEEAIAKPIAQSPSAEPKKSSEEKSDKSESKVDESSESKESEESSESKEN</sequence>
<protein>
    <recommendedName>
        <fullName>Protein bangles and beads</fullName>
    </recommendedName>
</protein>
<reference key="1">
    <citation type="journal article" date="1989" name="Development">
        <title>A Drosophila gene expressed in the embryonic CNS shares one conserved domain with the mammalian GAP-43.</title>
        <authorList>
            <person name="Ng S.C."/>
            <person name="Perkins L.A."/>
            <person name="Conboy G."/>
            <person name="Perrimon N."/>
            <person name="Fishman M.C."/>
        </authorList>
    </citation>
    <scope>NUCLEOTIDE SEQUENCE [MRNA]</scope>
    <scope>FUNCTION</scope>
    <scope>TISSUE SPECIFICITY</scope>
    <source>
        <tissue>Embryo</tissue>
    </source>
</reference>
<reference key="2">
    <citation type="journal article" date="1992" name="Genetics">
        <title>Genetic and developmental analysis of polytene section 17 of the X chromosome of Drosophila melanogaster.</title>
        <authorList>
            <person name="Eberl D.F."/>
            <person name="Perkins L.A."/>
            <person name="Engelstein M."/>
            <person name="Hilliker A.J."/>
            <person name="Perrimon N."/>
        </authorList>
    </citation>
    <scope>SEQUENCE REVISION</scope>
    <source>
        <tissue>Embryo</tissue>
    </source>
</reference>
<reference key="3">
    <citation type="journal article" date="2000" name="Science">
        <title>The genome sequence of Drosophila melanogaster.</title>
        <authorList>
            <person name="Adams M.D."/>
            <person name="Celniker S.E."/>
            <person name="Holt R.A."/>
            <person name="Evans C.A."/>
            <person name="Gocayne J.D."/>
            <person name="Amanatides P.G."/>
            <person name="Scherer S.E."/>
            <person name="Li P.W."/>
            <person name="Hoskins R.A."/>
            <person name="Galle R.F."/>
            <person name="George R.A."/>
            <person name="Lewis S.E."/>
            <person name="Richards S."/>
            <person name="Ashburner M."/>
            <person name="Henderson S.N."/>
            <person name="Sutton G.G."/>
            <person name="Wortman J.R."/>
            <person name="Yandell M.D."/>
            <person name="Zhang Q."/>
            <person name="Chen L.X."/>
            <person name="Brandon R.C."/>
            <person name="Rogers Y.-H.C."/>
            <person name="Blazej R.G."/>
            <person name="Champe M."/>
            <person name="Pfeiffer B.D."/>
            <person name="Wan K.H."/>
            <person name="Doyle C."/>
            <person name="Baxter E.G."/>
            <person name="Helt G."/>
            <person name="Nelson C.R."/>
            <person name="Miklos G.L.G."/>
            <person name="Abril J.F."/>
            <person name="Agbayani A."/>
            <person name="An H.-J."/>
            <person name="Andrews-Pfannkoch C."/>
            <person name="Baldwin D."/>
            <person name="Ballew R.M."/>
            <person name="Basu A."/>
            <person name="Baxendale J."/>
            <person name="Bayraktaroglu L."/>
            <person name="Beasley E.M."/>
            <person name="Beeson K.Y."/>
            <person name="Benos P.V."/>
            <person name="Berman B.P."/>
            <person name="Bhandari D."/>
            <person name="Bolshakov S."/>
            <person name="Borkova D."/>
            <person name="Botchan M.R."/>
            <person name="Bouck J."/>
            <person name="Brokstein P."/>
            <person name="Brottier P."/>
            <person name="Burtis K.C."/>
            <person name="Busam D.A."/>
            <person name="Butler H."/>
            <person name="Cadieu E."/>
            <person name="Center A."/>
            <person name="Chandra I."/>
            <person name="Cherry J.M."/>
            <person name="Cawley S."/>
            <person name="Dahlke C."/>
            <person name="Davenport L.B."/>
            <person name="Davies P."/>
            <person name="de Pablos B."/>
            <person name="Delcher A."/>
            <person name="Deng Z."/>
            <person name="Mays A.D."/>
            <person name="Dew I."/>
            <person name="Dietz S.M."/>
            <person name="Dodson K."/>
            <person name="Doup L.E."/>
            <person name="Downes M."/>
            <person name="Dugan-Rocha S."/>
            <person name="Dunkov B.C."/>
            <person name="Dunn P."/>
            <person name="Durbin K.J."/>
            <person name="Evangelista C.C."/>
            <person name="Ferraz C."/>
            <person name="Ferriera S."/>
            <person name="Fleischmann W."/>
            <person name="Fosler C."/>
            <person name="Gabrielian A.E."/>
            <person name="Garg N.S."/>
            <person name="Gelbart W.M."/>
            <person name="Glasser K."/>
            <person name="Glodek A."/>
            <person name="Gong F."/>
            <person name="Gorrell J.H."/>
            <person name="Gu Z."/>
            <person name="Guan P."/>
            <person name="Harris M."/>
            <person name="Harris N.L."/>
            <person name="Harvey D.A."/>
            <person name="Heiman T.J."/>
            <person name="Hernandez J.R."/>
            <person name="Houck J."/>
            <person name="Hostin D."/>
            <person name="Houston K.A."/>
            <person name="Howland T.J."/>
            <person name="Wei M.-H."/>
            <person name="Ibegwam C."/>
            <person name="Jalali M."/>
            <person name="Kalush F."/>
            <person name="Karpen G.H."/>
            <person name="Ke Z."/>
            <person name="Kennison J.A."/>
            <person name="Ketchum K.A."/>
            <person name="Kimmel B.E."/>
            <person name="Kodira C.D."/>
            <person name="Kraft C.L."/>
            <person name="Kravitz S."/>
            <person name="Kulp D."/>
            <person name="Lai Z."/>
            <person name="Lasko P."/>
            <person name="Lei Y."/>
            <person name="Levitsky A.A."/>
            <person name="Li J.H."/>
            <person name="Li Z."/>
            <person name="Liang Y."/>
            <person name="Lin X."/>
            <person name="Liu X."/>
            <person name="Mattei B."/>
            <person name="McIntosh T.C."/>
            <person name="McLeod M.P."/>
            <person name="McPherson D."/>
            <person name="Merkulov G."/>
            <person name="Milshina N.V."/>
            <person name="Mobarry C."/>
            <person name="Morris J."/>
            <person name="Moshrefi A."/>
            <person name="Mount S.M."/>
            <person name="Moy M."/>
            <person name="Murphy B."/>
            <person name="Murphy L."/>
            <person name="Muzny D.M."/>
            <person name="Nelson D.L."/>
            <person name="Nelson D.R."/>
            <person name="Nelson K.A."/>
            <person name="Nixon K."/>
            <person name="Nusskern D.R."/>
            <person name="Pacleb J.M."/>
            <person name="Palazzolo M."/>
            <person name="Pittman G.S."/>
            <person name="Pan S."/>
            <person name="Pollard J."/>
            <person name="Puri V."/>
            <person name="Reese M.G."/>
            <person name="Reinert K."/>
            <person name="Remington K."/>
            <person name="Saunders R.D.C."/>
            <person name="Scheeler F."/>
            <person name="Shen H."/>
            <person name="Shue B.C."/>
            <person name="Siden-Kiamos I."/>
            <person name="Simpson M."/>
            <person name="Skupski M.P."/>
            <person name="Smith T.J."/>
            <person name="Spier E."/>
            <person name="Spradling A.C."/>
            <person name="Stapleton M."/>
            <person name="Strong R."/>
            <person name="Sun E."/>
            <person name="Svirskas R."/>
            <person name="Tector C."/>
            <person name="Turner R."/>
            <person name="Venter E."/>
            <person name="Wang A.H."/>
            <person name="Wang X."/>
            <person name="Wang Z.-Y."/>
            <person name="Wassarman D.A."/>
            <person name="Weinstock G.M."/>
            <person name="Weissenbach J."/>
            <person name="Williams S.M."/>
            <person name="Woodage T."/>
            <person name="Worley K.C."/>
            <person name="Wu D."/>
            <person name="Yang S."/>
            <person name="Yao Q.A."/>
            <person name="Ye J."/>
            <person name="Yeh R.-F."/>
            <person name="Zaveri J.S."/>
            <person name="Zhan M."/>
            <person name="Zhang G."/>
            <person name="Zhao Q."/>
            <person name="Zheng L."/>
            <person name="Zheng X.H."/>
            <person name="Zhong F.N."/>
            <person name="Zhong W."/>
            <person name="Zhou X."/>
            <person name="Zhu S.C."/>
            <person name="Zhu X."/>
            <person name="Smith H.O."/>
            <person name="Gibbs R.A."/>
            <person name="Myers E.W."/>
            <person name="Rubin G.M."/>
            <person name="Venter J.C."/>
        </authorList>
    </citation>
    <scope>NUCLEOTIDE SEQUENCE [LARGE SCALE GENOMIC DNA]</scope>
    <source>
        <strain>Berkeley</strain>
    </source>
</reference>
<reference key="4">
    <citation type="journal article" date="2002" name="Genome Biol.">
        <title>Annotation of the Drosophila melanogaster euchromatic genome: a systematic review.</title>
        <authorList>
            <person name="Misra S."/>
            <person name="Crosby M.A."/>
            <person name="Mungall C.J."/>
            <person name="Matthews B.B."/>
            <person name="Campbell K.S."/>
            <person name="Hradecky P."/>
            <person name="Huang Y."/>
            <person name="Kaminker J.S."/>
            <person name="Millburn G.H."/>
            <person name="Prochnik S.E."/>
            <person name="Smith C.D."/>
            <person name="Tupy J.L."/>
            <person name="Whitfield E.J."/>
            <person name="Bayraktaroglu L."/>
            <person name="Berman B.P."/>
            <person name="Bettencourt B.R."/>
            <person name="Celniker S.E."/>
            <person name="de Grey A.D.N.J."/>
            <person name="Drysdale R.A."/>
            <person name="Harris N.L."/>
            <person name="Richter J."/>
            <person name="Russo S."/>
            <person name="Schroeder A.J."/>
            <person name="Shu S.Q."/>
            <person name="Stapleton M."/>
            <person name="Yamada C."/>
            <person name="Ashburner M."/>
            <person name="Gelbart W.M."/>
            <person name="Rubin G.M."/>
            <person name="Lewis S.E."/>
        </authorList>
    </citation>
    <scope>GENOME REANNOTATION</scope>
    <source>
        <strain>Berkeley</strain>
    </source>
</reference>
<reference key="5">
    <citation type="journal article" date="2002" name="Genome Biol.">
        <title>A Drosophila full-length cDNA resource.</title>
        <authorList>
            <person name="Stapleton M."/>
            <person name="Carlson J.W."/>
            <person name="Brokstein P."/>
            <person name="Yu C."/>
            <person name="Champe M."/>
            <person name="George R.A."/>
            <person name="Guarin H."/>
            <person name="Kronmiller B."/>
            <person name="Pacleb J.M."/>
            <person name="Park S."/>
            <person name="Wan K.H."/>
            <person name="Rubin G.M."/>
            <person name="Celniker S.E."/>
        </authorList>
    </citation>
    <scope>NUCLEOTIDE SEQUENCE [LARGE SCALE MRNA]</scope>
    <source>
        <strain>Berkeley</strain>
        <tissue>Head</tissue>
    </source>
</reference>
<reference key="6">
    <citation type="journal article" date="2008" name="J. Proteome Res.">
        <title>Phosphoproteome analysis of Drosophila melanogaster embryos.</title>
        <authorList>
            <person name="Zhai B."/>
            <person name="Villen J."/>
            <person name="Beausoleil S.A."/>
            <person name="Mintseris J."/>
            <person name="Gygi S.P."/>
        </authorList>
    </citation>
    <scope>PHOSPHORYLATION [LARGE SCALE ANALYSIS] AT SER-430; SER-433; SER-436 AND SER-437</scope>
    <scope>IDENTIFICATION BY MASS SPECTROMETRY</scope>
    <source>
        <tissue>Embryo</tissue>
    </source>
</reference>
<comment type="function">
    <text evidence="3">May play an important role during development.</text>
</comment>
<comment type="tissue specificity">
    <text evidence="3">Expressed in the embryonic CNS, in sets of cells that are segmentally reiterated along the periphery of the nervous system.</text>
</comment>
<name>BNB_DROME</name>
<dbReference type="EMBL" id="X63828">
    <property type="protein sequence ID" value="CAA45323.1"/>
    <property type="molecule type" value="mRNA"/>
</dbReference>
<dbReference type="EMBL" id="AE014298">
    <property type="protein sequence ID" value="AAN09476.1"/>
    <property type="molecule type" value="Genomic_DNA"/>
</dbReference>
<dbReference type="EMBL" id="AE014298">
    <property type="protein sequence ID" value="AAN09477.1"/>
    <property type="molecule type" value="Genomic_DNA"/>
</dbReference>
<dbReference type="EMBL" id="AE014298">
    <property type="protein sequence ID" value="AAN09478.1"/>
    <property type="molecule type" value="Genomic_DNA"/>
</dbReference>
<dbReference type="EMBL" id="AY060682">
    <property type="protein sequence ID" value="AAL28230.1"/>
    <property type="molecule type" value="mRNA"/>
</dbReference>
<dbReference type="PIR" id="A43555">
    <property type="entry name" value="A43555"/>
</dbReference>
<dbReference type="RefSeq" id="NP_523406.1">
    <property type="nucleotide sequence ID" value="NM_078682.4"/>
</dbReference>
<dbReference type="RefSeq" id="NP_728201.1">
    <property type="nucleotide sequence ID" value="NM_167633.2"/>
</dbReference>
<dbReference type="RefSeq" id="NP_728202.1">
    <property type="nucleotide sequence ID" value="NM_167634.3"/>
</dbReference>
<dbReference type="RefSeq" id="NP_728203.1">
    <property type="nucleotide sequence ID" value="NM_167635.3"/>
</dbReference>
<dbReference type="BioGRID" id="59181">
    <property type="interactions" value="8"/>
</dbReference>
<dbReference type="DIP" id="DIP-21221N"/>
<dbReference type="IntAct" id="P29746">
    <property type="interactions" value="4"/>
</dbReference>
<dbReference type="STRING" id="7227.FBpp0074427"/>
<dbReference type="GlyGen" id="P29746">
    <property type="glycosylation" value="2 sites"/>
</dbReference>
<dbReference type="iPTMnet" id="P29746"/>
<dbReference type="PaxDb" id="7227-FBpp0074427"/>
<dbReference type="DNASU" id="32872"/>
<dbReference type="EnsemblMetazoa" id="FBtr0074656">
    <property type="protein sequence ID" value="FBpp0074427"/>
    <property type="gene ID" value="FBgn0001090"/>
</dbReference>
<dbReference type="EnsemblMetazoa" id="FBtr0074657">
    <property type="protein sequence ID" value="FBpp0074428"/>
    <property type="gene ID" value="FBgn0001090"/>
</dbReference>
<dbReference type="EnsemblMetazoa" id="FBtr0074658">
    <property type="protein sequence ID" value="FBpp0074429"/>
    <property type="gene ID" value="FBgn0001090"/>
</dbReference>
<dbReference type="EnsemblMetazoa" id="FBtr0074659">
    <property type="protein sequence ID" value="FBpp0074430"/>
    <property type="gene ID" value="FBgn0001090"/>
</dbReference>
<dbReference type="GeneID" id="32872"/>
<dbReference type="KEGG" id="dme:Dmel_CG7088"/>
<dbReference type="AGR" id="FB:FBgn0001090"/>
<dbReference type="CTD" id="32872"/>
<dbReference type="FlyBase" id="FBgn0001090">
    <property type="gene designation" value="bnb"/>
</dbReference>
<dbReference type="VEuPathDB" id="VectorBase:FBgn0001090"/>
<dbReference type="eggNOG" id="ENOG502T8DV">
    <property type="taxonomic scope" value="Eukaryota"/>
</dbReference>
<dbReference type="HOGENOM" id="CLU_036657_0_0_1"/>
<dbReference type="InParanoid" id="P29746"/>
<dbReference type="OMA" id="HPKRPYE"/>
<dbReference type="OrthoDB" id="7871594at2759"/>
<dbReference type="PhylomeDB" id="P29746"/>
<dbReference type="SignaLink" id="P29746"/>
<dbReference type="BioGRID-ORCS" id="32872">
    <property type="hits" value="0 hits in 1 CRISPR screen"/>
</dbReference>
<dbReference type="GenomeRNAi" id="32872"/>
<dbReference type="PRO" id="PR:P29746"/>
<dbReference type="Proteomes" id="UP000000803">
    <property type="component" value="Chromosome X"/>
</dbReference>
<dbReference type="Bgee" id="FBgn0001090">
    <property type="expression patterns" value="Expressed in adult optic chiasma glial cell (Drosophila) in insect head and 195 other cell types or tissues"/>
</dbReference>
<dbReference type="GO" id="GO:0042063">
    <property type="term" value="P:gliogenesis"/>
    <property type="evidence" value="ECO:0000270"/>
    <property type="project" value="FlyBase"/>
</dbReference>
<gene>
    <name type="primary">bnb</name>
    <name type="ORF">CG7088</name>
</gene>
<accession>P29746</accession>
<accession>A4V4R4</accession>
<accession>Q0KHQ7</accession>
<accession>Q9VWQ0</accession>
<organism>
    <name type="scientific">Drosophila melanogaster</name>
    <name type="common">Fruit fly</name>
    <dbReference type="NCBI Taxonomy" id="7227"/>
    <lineage>
        <taxon>Eukaryota</taxon>
        <taxon>Metazoa</taxon>
        <taxon>Ecdysozoa</taxon>
        <taxon>Arthropoda</taxon>
        <taxon>Hexapoda</taxon>
        <taxon>Insecta</taxon>
        <taxon>Pterygota</taxon>
        <taxon>Neoptera</taxon>
        <taxon>Endopterygota</taxon>
        <taxon>Diptera</taxon>
        <taxon>Brachycera</taxon>
        <taxon>Muscomorpha</taxon>
        <taxon>Ephydroidea</taxon>
        <taxon>Drosophilidae</taxon>
        <taxon>Drosophila</taxon>
        <taxon>Sophophora</taxon>
    </lineage>
</organism>
<feature type="chain" id="PRO_0000064955" description="Protein bangles and beads">
    <location>
        <begin position="1"/>
        <end position="442"/>
    </location>
</feature>
<feature type="region of interest" description="Disordered" evidence="1">
    <location>
        <begin position="47"/>
        <end position="442"/>
    </location>
</feature>
<feature type="compositionally biased region" description="Basic and acidic residues" evidence="1">
    <location>
        <begin position="55"/>
        <end position="67"/>
    </location>
</feature>
<feature type="compositionally biased region" description="Basic and acidic residues" evidence="1">
    <location>
        <begin position="114"/>
        <end position="125"/>
    </location>
</feature>
<feature type="compositionally biased region" description="Basic and acidic residues" evidence="1">
    <location>
        <begin position="133"/>
        <end position="146"/>
    </location>
</feature>
<feature type="compositionally biased region" description="Low complexity" evidence="1">
    <location>
        <begin position="159"/>
        <end position="172"/>
    </location>
</feature>
<feature type="compositionally biased region" description="Basic and acidic residues" evidence="1">
    <location>
        <begin position="177"/>
        <end position="194"/>
    </location>
</feature>
<feature type="compositionally biased region" description="Basic and acidic residues" evidence="1">
    <location>
        <begin position="204"/>
        <end position="240"/>
    </location>
</feature>
<feature type="compositionally biased region" description="Low complexity" evidence="1">
    <location>
        <begin position="241"/>
        <end position="255"/>
    </location>
</feature>
<feature type="compositionally biased region" description="Low complexity" evidence="1">
    <location>
        <begin position="272"/>
        <end position="288"/>
    </location>
</feature>
<feature type="compositionally biased region" description="Basic and acidic residues" evidence="1">
    <location>
        <begin position="329"/>
        <end position="339"/>
    </location>
</feature>
<feature type="compositionally biased region" description="Low complexity" evidence="1">
    <location>
        <begin position="357"/>
        <end position="376"/>
    </location>
</feature>
<feature type="compositionally biased region" description="Basic and acidic residues" evidence="1">
    <location>
        <begin position="408"/>
        <end position="442"/>
    </location>
</feature>
<feature type="modified residue" description="Phosphoserine" evidence="2">
    <location>
        <position position="430"/>
    </location>
</feature>
<feature type="modified residue" description="Phosphoserine" evidence="2">
    <location>
        <position position="433"/>
    </location>
</feature>
<feature type="modified residue" description="Phosphoserine" evidence="2">
    <location>
        <position position="436"/>
    </location>
</feature>
<feature type="modified residue" description="Phosphoserine" evidence="2">
    <location>
        <position position="437"/>
    </location>
</feature>
<evidence type="ECO:0000256" key="1">
    <source>
        <dbReference type="SAM" id="MobiDB-lite"/>
    </source>
</evidence>
<evidence type="ECO:0000269" key="2">
    <source>
    </source>
</evidence>
<evidence type="ECO:0000269" key="3">
    <source>
    </source>
</evidence>
<keyword id="KW-0217">Developmental protein</keyword>
<keyword id="KW-0597">Phosphoprotein</keyword>
<keyword id="KW-1185">Reference proteome</keyword>